<proteinExistence type="inferred from homology"/>
<name>SYK_BACAN</name>
<reference key="1">
    <citation type="journal article" date="2003" name="Nature">
        <title>The genome sequence of Bacillus anthracis Ames and comparison to closely related bacteria.</title>
        <authorList>
            <person name="Read T.D."/>
            <person name="Peterson S.N."/>
            <person name="Tourasse N.J."/>
            <person name="Baillie L.W."/>
            <person name="Paulsen I.T."/>
            <person name="Nelson K.E."/>
            <person name="Tettelin H."/>
            <person name="Fouts D.E."/>
            <person name="Eisen J.A."/>
            <person name="Gill S.R."/>
            <person name="Holtzapple E.K."/>
            <person name="Okstad O.A."/>
            <person name="Helgason E."/>
            <person name="Rilstone J."/>
            <person name="Wu M."/>
            <person name="Kolonay J.F."/>
            <person name="Beanan M.J."/>
            <person name="Dodson R.J."/>
            <person name="Brinkac L.M."/>
            <person name="Gwinn M.L."/>
            <person name="DeBoy R.T."/>
            <person name="Madpu R."/>
            <person name="Daugherty S.C."/>
            <person name="Durkin A.S."/>
            <person name="Haft D.H."/>
            <person name="Nelson W.C."/>
            <person name="Peterson J.D."/>
            <person name="Pop M."/>
            <person name="Khouri H.M."/>
            <person name="Radune D."/>
            <person name="Benton J.L."/>
            <person name="Mahamoud Y."/>
            <person name="Jiang L."/>
            <person name="Hance I.R."/>
            <person name="Weidman J.F."/>
            <person name="Berry K.J."/>
            <person name="Plaut R.D."/>
            <person name="Wolf A.M."/>
            <person name="Watkins K.L."/>
            <person name="Nierman W.C."/>
            <person name="Hazen A."/>
            <person name="Cline R.T."/>
            <person name="Redmond C."/>
            <person name="Thwaite J.E."/>
            <person name="White O."/>
            <person name="Salzberg S.L."/>
            <person name="Thomason B."/>
            <person name="Friedlander A.M."/>
            <person name="Koehler T.M."/>
            <person name="Hanna P.C."/>
            <person name="Kolstoe A.-B."/>
            <person name="Fraser C.M."/>
        </authorList>
    </citation>
    <scope>NUCLEOTIDE SEQUENCE [LARGE SCALE GENOMIC DNA]</scope>
    <source>
        <strain>Ames / isolate Porton</strain>
    </source>
</reference>
<reference key="2">
    <citation type="journal article" date="2009" name="J. Bacteriol.">
        <title>The complete genome sequence of Bacillus anthracis Ames 'Ancestor'.</title>
        <authorList>
            <person name="Ravel J."/>
            <person name="Jiang L."/>
            <person name="Stanley S.T."/>
            <person name="Wilson M.R."/>
            <person name="Decker R.S."/>
            <person name="Read T.D."/>
            <person name="Worsham P."/>
            <person name="Keim P.S."/>
            <person name="Salzberg S.L."/>
            <person name="Fraser-Liggett C.M."/>
            <person name="Rasko D.A."/>
        </authorList>
    </citation>
    <scope>NUCLEOTIDE SEQUENCE [LARGE SCALE GENOMIC DNA]</scope>
    <source>
        <strain>Ames ancestor</strain>
    </source>
</reference>
<reference key="3">
    <citation type="submission" date="2004-01" db="EMBL/GenBank/DDBJ databases">
        <title>Complete genome sequence of Bacillus anthracis Sterne.</title>
        <authorList>
            <person name="Brettin T.S."/>
            <person name="Bruce D."/>
            <person name="Challacombe J.F."/>
            <person name="Gilna P."/>
            <person name="Han C."/>
            <person name="Hill K."/>
            <person name="Hitchcock P."/>
            <person name="Jackson P."/>
            <person name="Keim P."/>
            <person name="Longmire J."/>
            <person name="Lucas S."/>
            <person name="Okinaka R."/>
            <person name="Richardson P."/>
            <person name="Rubin E."/>
            <person name="Tice H."/>
        </authorList>
    </citation>
    <scope>NUCLEOTIDE SEQUENCE [LARGE SCALE GENOMIC DNA]</scope>
    <source>
        <strain>Sterne</strain>
    </source>
</reference>
<comment type="catalytic activity">
    <reaction evidence="1">
        <text>tRNA(Lys) + L-lysine + ATP = L-lysyl-tRNA(Lys) + AMP + diphosphate</text>
        <dbReference type="Rhea" id="RHEA:20792"/>
        <dbReference type="Rhea" id="RHEA-COMP:9696"/>
        <dbReference type="Rhea" id="RHEA-COMP:9697"/>
        <dbReference type="ChEBI" id="CHEBI:30616"/>
        <dbReference type="ChEBI" id="CHEBI:32551"/>
        <dbReference type="ChEBI" id="CHEBI:33019"/>
        <dbReference type="ChEBI" id="CHEBI:78442"/>
        <dbReference type="ChEBI" id="CHEBI:78529"/>
        <dbReference type="ChEBI" id="CHEBI:456215"/>
        <dbReference type="EC" id="6.1.1.6"/>
    </reaction>
</comment>
<comment type="cofactor">
    <cofactor evidence="1">
        <name>Mg(2+)</name>
        <dbReference type="ChEBI" id="CHEBI:18420"/>
    </cofactor>
    <text evidence="1">Binds 3 Mg(2+) ions per subunit.</text>
</comment>
<comment type="subunit">
    <text evidence="1">Homodimer.</text>
</comment>
<comment type="subcellular location">
    <subcellularLocation>
        <location evidence="1">Cytoplasm</location>
    </subcellularLocation>
</comment>
<comment type="similarity">
    <text evidence="1">Belongs to the class-II aminoacyl-tRNA synthetase family.</text>
</comment>
<keyword id="KW-0030">Aminoacyl-tRNA synthetase</keyword>
<keyword id="KW-0067">ATP-binding</keyword>
<keyword id="KW-0963">Cytoplasm</keyword>
<keyword id="KW-0436">Ligase</keyword>
<keyword id="KW-0460">Magnesium</keyword>
<keyword id="KW-0479">Metal-binding</keyword>
<keyword id="KW-0547">Nucleotide-binding</keyword>
<keyword id="KW-0648">Protein biosynthesis</keyword>
<keyword id="KW-1185">Reference proteome</keyword>
<sequence>MDNMNHEELNDQLLVRREKLHNLREQGIDPFGKRFERTNATNDLLSLYGEFSKEELEEKEISVSIAGRIMTKRGKGKAGFAHIQDLHGQVQIYVRKDAVGDEEYELFKTADLGDLVGIEGKVFKTNVGELSVKATGFTLLTKSLRPLPDKYHGLKDVEQRYRQRYLDLITSMESRETFVTRSKIIREMRRYLDDNGYLEVETPMMHAIAGGASARPFITHHNALDMELYMRIAIELHLKRLIVGGLEKVYEIGRVFRNEGVSTRHNPEFTMIELYEAYADYKDIMKLTENMVAHIAKQVLGTTTIQYGDYEINLEPEWTRLHMVDAIKEHSGADFWNPMSVEEARELAKEHNVEIKDTMEVGHIINEFFEQKVEDKLIQPTFIYGHPVEISPLAKKNDEDPRFTDRFELFIVAREHANAFTELNDPIDQKERFEAQLKEREQGNDEAHMMDDDYIEALEYGMPPTGGLGIGIDRLVMLLTNAPSIRDVLLFPAMRHKQD</sequence>
<organism>
    <name type="scientific">Bacillus anthracis</name>
    <dbReference type="NCBI Taxonomy" id="1392"/>
    <lineage>
        <taxon>Bacteria</taxon>
        <taxon>Bacillati</taxon>
        <taxon>Bacillota</taxon>
        <taxon>Bacilli</taxon>
        <taxon>Bacillales</taxon>
        <taxon>Bacillaceae</taxon>
        <taxon>Bacillus</taxon>
        <taxon>Bacillus cereus group</taxon>
    </lineage>
</organism>
<feature type="chain" id="PRO_0000152596" description="Lysine--tRNA ligase">
    <location>
        <begin position="1"/>
        <end position="499"/>
    </location>
</feature>
<feature type="binding site" evidence="1">
    <location>
        <position position="408"/>
    </location>
    <ligand>
        <name>Mg(2+)</name>
        <dbReference type="ChEBI" id="CHEBI:18420"/>
        <label>1</label>
    </ligand>
</feature>
<feature type="binding site" evidence="1">
    <location>
        <position position="415"/>
    </location>
    <ligand>
        <name>Mg(2+)</name>
        <dbReference type="ChEBI" id="CHEBI:18420"/>
        <label>1</label>
    </ligand>
</feature>
<feature type="binding site" evidence="1">
    <location>
        <position position="415"/>
    </location>
    <ligand>
        <name>Mg(2+)</name>
        <dbReference type="ChEBI" id="CHEBI:18420"/>
        <label>2</label>
    </ligand>
</feature>
<gene>
    <name evidence="1" type="primary">lysS</name>
    <name type="ordered locus">BA_0076</name>
    <name type="ordered locus">GBAA_0076</name>
    <name type="ordered locus">BAS0076</name>
</gene>
<evidence type="ECO:0000255" key="1">
    <source>
        <dbReference type="HAMAP-Rule" id="MF_00252"/>
    </source>
</evidence>
<dbReference type="EC" id="6.1.1.6" evidence="1"/>
<dbReference type="EMBL" id="AE016879">
    <property type="protein sequence ID" value="AAP24131.1"/>
    <property type="molecule type" value="Genomic_DNA"/>
</dbReference>
<dbReference type="EMBL" id="AE017334">
    <property type="protein sequence ID" value="AAT29154.1"/>
    <property type="molecule type" value="Genomic_DNA"/>
</dbReference>
<dbReference type="EMBL" id="AE017225">
    <property type="protein sequence ID" value="AAT52414.1"/>
    <property type="molecule type" value="Genomic_DNA"/>
</dbReference>
<dbReference type="RefSeq" id="NP_842645.1">
    <property type="nucleotide sequence ID" value="NC_003997.3"/>
</dbReference>
<dbReference type="RefSeq" id="WP_000369671.1">
    <property type="nucleotide sequence ID" value="NZ_WXXJ01000031.1"/>
</dbReference>
<dbReference type="RefSeq" id="YP_026363.1">
    <property type="nucleotide sequence ID" value="NC_005945.1"/>
</dbReference>
<dbReference type="SMR" id="Q81VW3"/>
<dbReference type="IntAct" id="Q81VW3">
    <property type="interactions" value="3"/>
</dbReference>
<dbReference type="STRING" id="261594.GBAA_0076"/>
<dbReference type="DNASU" id="1086603"/>
<dbReference type="GeneID" id="45020119"/>
<dbReference type="KEGG" id="ban:BA_0076"/>
<dbReference type="KEGG" id="banh:HYU01_00430"/>
<dbReference type="KEGG" id="bar:GBAA_0076"/>
<dbReference type="KEGG" id="bat:BAS0076"/>
<dbReference type="PATRIC" id="fig|198094.11.peg.73"/>
<dbReference type="eggNOG" id="COG1190">
    <property type="taxonomic scope" value="Bacteria"/>
</dbReference>
<dbReference type="HOGENOM" id="CLU_008255_6_0_9"/>
<dbReference type="OMA" id="DFRNEGM"/>
<dbReference type="OrthoDB" id="9801152at2"/>
<dbReference type="Proteomes" id="UP000000427">
    <property type="component" value="Chromosome"/>
</dbReference>
<dbReference type="Proteomes" id="UP000000594">
    <property type="component" value="Chromosome"/>
</dbReference>
<dbReference type="GO" id="GO:0005829">
    <property type="term" value="C:cytosol"/>
    <property type="evidence" value="ECO:0007669"/>
    <property type="project" value="TreeGrafter"/>
</dbReference>
<dbReference type="GO" id="GO:0005524">
    <property type="term" value="F:ATP binding"/>
    <property type="evidence" value="ECO:0007669"/>
    <property type="project" value="UniProtKB-UniRule"/>
</dbReference>
<dbReference type="GO" id="GO:0140096">
    <property type="term" value="F:catalytic activity, acting on a protein"/>
    <property type="evidence" value="ECO:0007669"/>
    <property type="project" value="UniProtKB-ARBA"/>
</dbReference>
<dbReference type="GO" id="GO:0004824">
    <property type="term" value="F:lysine-tRNA ligase activity"/>
    <property type="evidence" value="ECO:0007669"/>
    <property type="project" value="UniProtKB-UniRule"/>
</dbReference>
<dbReference type="GO" id="GO:0000287">
    <property type="term" value="F:magnesium ion binding"/>
    <property type="evidence" value="ECO:0007669"/>
    <property type="project" value="UniProtKB-UniRule"/>
</dbReference>
<dbReference type="GO" id="GO:0016740">
    <property type="term" value="F:transferase activity"/>
    <property type="evidence" value="ECO:0007669"/>
    <property type="project" value="UniProtKB-ARBA"/>
</dbReference>
<dbReference type="GO" id="GO:0000049">
    <property type="term" value="F:tRNA binding"/>
    <property type="evidence" value="ECO:0007669"/>
    <property type="project" value="TreeGrafter"/>
</dbReference>
<dbReference type="GO" id="GO:0006430">
    <property type="term" value="P:lysyl-tRNA aminoacylation"/>
    <property type="evidence" value="ECO:0007669"/>
    <property type="project" value="UniProtKB-UniRule"/>
</dbReference>
<dbReference type="CDD" id="cd00775">
    <property type="entry name" value="LysRS_core"/>
    <property type="match status" value="1"/>
</dbReference>
<dbReference type="CDD" id="cd04322">
    <property type="entry name" value="LysRS_N"/>
    <property type="match status" value="1"/>
</dbReference>
<dbReference type="FunFam" id="2.40.50.140:FF:000024">
    <property type="entry name" value="Lysine--tRNA ligase"/>
    <property type="match status" value="1"/>
</dbReference>
<dbReference type="FunFam" id="3.30.930.10:FF:000001">
    <property type="entry name" value="Lysine--tRNA ligase"/>
    <property type="match status" value="1"/>
</dbReference>
<dbReference type="Gene3D" id="3.30.930.10">
    <property type="entry name" value="Bira Bifunctional Protein, Domain 2"/>
    <property type="match status" value="1"/>
</dbReference>
<dbReference type="Gene3D" id="2.40.50.140">
    <property type="entry name" value="Nucleic acid-binding proteins"/>
    <property type="match status" value="1"/>
</dbReference>
<dbReference type="HAMAP" id="MF_00252">
    <property type="entry name" value="Lys_tRNA_synth_class2"/>
    <property type="match status" value="1"/>
</dbReference>
<dbReference type="InterPro" id="IPR004364">
    <property type="entry name" value="Aa-tRNA-synt_II"/>
</dbReference>
<dbReference type="InterPro" id="IPR006195">
    <property type="entry name" value="aa-tRNA-synth_II"/>
</dbReference>
<dbReference type="InterPro" id="IPR045864">
    <property type="entry name" value="aa-tRNA-synth_II/BPL/LPL"/>
</dbReference>
<dbReference type="InterPro" id="IPR002313">
    <property type="entry name" value="Lys-tRNA-ligase_II"/>
</dbReference>
<dbReference type="InterPro" id="IPR034762">
    <property type="entry name" value="Lys-tRNA-ligase_II_bac/euk"/>
</dbReference>
<dbReference type="InterPro" id="IPR044136">
    <property type="entry name" value="Lys-tRNA-ligase_II_N"/>
</dbReference>
<dbReference type="InterPro" id="IPR018149">
    <property type="entry name" value="Lys-tRNA-synth_II_C"/>
</dbReference>
<dbReference type="InterPro" id="IPR012340">
    <property type="entry name" value="NA-bd_OB-fold"/>
</dbReference>
<dbReference type="InterPro" id="IPR004365">
    <property type="entry name" value="NA-bd_OB_tRNA"/>
</dbReference>
<dbReference type="NCBIfam" id="TIGR00499">
    <property type="entry name" value="lysS_bact"/>
    <property type="match status" value="1"/>
</dbReference>
<dbReference type="NCBIfam" id="NF001756">
    <property type="entry name" value="PRK00484.1"/>
    <property type="match status" value="1"/>
</dbReference>
<dbReference type="PANTHER" id="PTHR42918:SF15">
    <property type="entry name" value="LYSINE--TRNA LIGASE, CHLOROPLASTIC_MITOCHONDRIAL"/>
    <property type="match status" value="1"/>
</dbReference>
<dbReference type="PANTHER" id="PTHR42918">
    <property type="entry name" value="LYSYL-TRNA SYNTHETASE"/>
    <property type="match status" value="1"/>
</dbReference>
<dbReference type="Pfam" id="PF00152">
    <property type="entry name" value="tRNA-synt_2"/>
    <property type="match status" value="1"/>
</dbReference>
<dbReference type="Pfam" id="PF01336">
    <property type="entry name" value="tRNA_anti-codon"/>
    <property type="match status" value="1"/>
</dbReference>
<dbReference type="PIRSF" id="PIRSF039101">
    <property type="entry name" value="LysRS2"/>
    <property type="match status" value="1"/>
</dbReference>
<dbReference type="PRINTS" id="PR00982">
    <property type="entry name" value="TRNASYNTHLYS"/>
</dbReference>
<dbReference type="SUPFAM" id="SSF55681">
    <property type="entry name" value="Class II aaRS and biotin synthetases"/>
    <property type="match status" value="1"/>
</dbReference>
<dbReference type="SUPFAM" id="SSF50249">
    <property type="entry name" value="Nucleic acid-binding proteins"/>
    <property type="match status" value="1"/>
</dbReference>
<dbReference type="PROSITE" id="PS50862">
    <property type="entry name" value="AA_TRNA_LIGASE_II"/>
    <property type="match status" value="1"/>
</dbReference>
<accession>Q81VW3</accession>
<accession>Q6I4W7</accession>
<accession>Q6KYL1</accession>
<protein>
    <recommendedName>
        <fullName evidence="1">Lysine--tRNA ligase</fullName>
        <ecNumber evidence="1">6.1.1.6</ecNumber>
    </recommendedName>
    <alternativeName>
        <fullName evidence="1">Lysyl-tRNA synthetase</fullName>
        <shortName evidence="1">LysRS</shortName>
    </alternativeName>
</protein>